<accession>Q9ZRZ8</accession>
<accession>O23506</accession>
<accession>Q0WRF7</accession>
<gene>
    <name type="primary">RH28</name>
    <name type="ordered locus">At4g16630</name>
    <name type="ORF">dl4340c</name>
    <name type="ORF">FCAALL.424</name>
</gene>
<organism>
    <name type="scientific">Arabidopsis thaliana</name>
    <name type="common">Mouse-ear cress</name>
    <dbReference type="NCBI Taxonomy" id="3702"/>
    <lineage>
        <taxon>Eukaryota</taxon>
        <taxon>Viridiplantae</taxon>
        <taxon>Streptophyta</taxon>
        <taxon>Embryophyta</taxon>
        <taxon>Tracheophyta</taxon>
        <taxon>Spermatophyta</taxon>
        <taxon>Magnoliopsida</taxon>
        <taxon>eudicotyledons</taxon>
        <taxon>Gunneridae</taxon>
        <taxon>Pentapetalae</taxon>
        <taxon>rosids</taxon>
        <taxon>malvids</taxon>
        <taxon>Brassicales</taxon>
        <taxon>Brassicaceae</taxon>
        <taxon>Camelineae</taxon>
        <taxon>Arabidopsis</taxon>
    </lineage>
</organism>
<feature type="chain" id="PRO_0000239168" description="DEAD-box ATP-dependent RNA helicase 28">
    <location>
        <begin position="1"/>
        <end position="789"/>
    </location>
</feature>
<feature type="domain" description="Helicase ATP-binding" evidence="2">
    <location>
        <begin position="198"/>
        <end position="372"/>
    </location>
</feature>
<feature type="domain" description="Helicase C-terminal" evidence="3">
    <location>
        <begin position="402"/>
        <end position="546"/>
    </location>
</feature>
<feature type="region of interest" description="Disordered" evidence="4">
    <location>
        <begin position="1"/>
        <end position="152"/>
    </location>
</feature>
<feature type="region of interest" description="Disordered" evidence="4">
    <location>
        <begin position="611"/>
        <end position="789"/>
    </location>
</feature>
<feature type="coiled-coil region" evidence="1">
    <location>
        <begin position="13"/>
        <end position="66"/>
    </location>
</feature>
<feature type="coiled-coil region" evidence="1">
    <location>
        <begin position="110"/>
        <end position="135"/>
    </location>
</feature>
<feature type="coiled-coil region" evidence="1">
    <location>
        <begin position="563"/>
        <end position="591"/>
    </location>
</feature>
<feature type="coiled-coil region" evidence="1">
    <location>
        <begin position="628"/>
        <end position="677"/>
    </location>
</feature>
<feature type="short sequence motif" description="Q motif">
    <location>
        <begin position="167"/>
        <end position="195"/>
    </location>
</feature>
<feature type="short sequence motif" description="DEAD box">
    <location>
        <begin position="320"/>
        <end position="323"/>
    </location>
</feature>
<feature type="compositionally biased region" description="Acidic residues" evidence="4">
    <location>
        <begin position="23"/>
        <end position="60"/>
    </location>
</feature>
<feature type="compositionally biased region" description="Basic and acidic residues" evidence="4">
    <location>
        <begin position="83"/>
        <end position="99"/>
    </location>
</feature>
<feature type="compositionally biased region" description="Acidic residues" evidence="4">
    <location>
        <begin position="112"/>
        <end position="127"/>
    </location>
</feature>
<feature type="compositionally biased region" description="Basic and acidic residues" evidence="4">
    <location>
        <begin position="628"/>
        <end position="637"/>
    </location>
</feature>
<feature type="compositionally biased region" description="Basic residues" evidence="4">
    <location>
        <begin position="638"/>
        <end position="656"/>
    </location>
</feature>
<feature type="compositionally biased region" description="Acidic residues" evidence="4">
    <location>
        <begin position="665"/>
        <end position="678"/>
    </location>
</feature>
<feature type="compositionally biased region" description="Basic and acidic residues" evidence="4">
    <location>
        <begin position="691"/>
        <end position="701"/>
    </location>
</feature>
<feature type="compositionally biased region" description="Basic and acidic residues" evidence="4">
    <location>
        <begin position="718"/>
        <end position="734"/>
    </location>
</feature>
<feature type="compositionally biased region" description="Basic and acidic residues" evidence="4">
    <location>
        <begin position="743"/>
        <end position="761"/>
    </location>
</feature>
<feature type="compositionally biased region" description="Basic residues" evidence="4">
    <location>
        <begin position="772"/>
        <end position="789"/>
    </location>
</feature>
<feature type="binding site" evidence="2">
    <location>
        <begin position="211"/>
        <end position="218"/>
    </location>
    <ligand>
        <name>ATP</name>
        <dbReference type="ChEBI" id="CHEBI:30616"/>
    </ligand>
</feature>
<sequence length="789" mass="89355">MPSSFFFEDASDDELELIRNQEDSSEEDVKEGEAEEHEAGEDEDGEEEYEEEDDDEEEEDEKRKRDADAQSPWDFASYSSSVGEEHARRHTTSIDEKISKAIQHRPVPISINEEEEEEEEEEDASDAETDKQEEYLSEDDEAAEYKPEDATPKPFFSTVDGVSFHADTFMELNLSRPLLRACETLGYKKPTPIQAACIPLALTGRDLCASAITGSGKTAAFALPTLERLLFRPKRVFATRVLILTPTRELAVQIHSMIQNLAQFTDIKCGLIVGGLSVREQEVVLRSMPDIVVATPGRMIDHLRNSMSVDLDDLAVLILDEADRLLQTGFATEITELVRLCPKRRQTMLFSATMTEEVKELVKLSLNKPLRLSADPSARRPPGLTEEVVRIRRTREANQEAVLLSLCTRTFKSKVIIFSGTKQAAHRLKILFGLAGLKAAELHGNLTQAQRLDSLELFRKQEVDFLIATDVAARGLDIIGVQTVINYACPREIDSYVHRVGRTARAGREGYAVTFVTDSDRSLLKVIAKKVGSKLKSRVIPEQSIVKWSQIIDEMEDQYSAVISAERDERALRKAEMEFAKAENMLEHRDEIYARPKRTWFMTEKEKKLVAQAEKDSAGNPAGGELVSADRAEDLKMKEKRKREREKNLPRKKRRKLEAAREMLEDNEGEEEEEDEEGDEKRGRSRGKDKKKQETDKKGLTLKDLGYMRAKAVKAKQRAIDSGKMERPKPDKKQSRSKPRNQPRGEEMKDLFKSDMGEKKQGRGGAAAAAKPRTKSKNSFKSKARYKRR</sequence>
<name>RH28_ARATH</name>
<reference key="1">
    <citation type="journal article" date="1999" name="Nucleic Acids Res.">
        <title>The DEAD box RNA helicase family in Arabidopsis thaliana.</title>
        <authorList>
            <person name="Aubourg S."/>
            <person name="Kreis M."/>
            <person name="Lecharny A."/>
        </authorList>
    </citation>
    <scope>NUCLEOTIDE SEQUENCE [MRNA]</scope>
    <source>
        <strain>cv. Columbia</strain>
    </source>
</reference>
<reference key="2">
    <citation type="journal article" date="1998" name="Nature">
        <title>Analysis of 1.9 Mb of contiguous sequence from chromosome 4 of Arabidopsis thaliana.</title>
        <authorList>
            <person name="Bevan M."/>
            <person name="Bancroft I."/>
            <person name="Bent E."/>
            <person name="Love K."/>
            <person name="Goodman H.M."/>
            <person name="Dean C."/>
            <person name="Bergkamp R."/>
            <person name="Dirkse W."/>
            <person name="van Staveren M."/>
            <person name="Stiekema W."/>
            <person name="Drost L."/>
            <person name="Ridley P."/>
            <person name="Hudson S.-A."/>
            <person name="Patel K."/>
            <person name="Murphy G."/>
            <person name="Piffanelli P."/>
            <person name="Wedler H."/>
            <person name="Wedler E."/>
            <person name="Wambutt R."/>
            <person name="Weitzenegger T."/>
            <person name="Pohl T."/>
            <person name="Terryn N."/>
            <person name="Gielen J."/>
            <person name="Villarroel R."/>
            <person name="De Clercq R."/>
            <person name="van Montagu M."/>
            <person name="Lecharny A."/>
            <person name="Aubourg S."/>
            <person name="Gy I."/>
            <person name="Kreis M."/>
            <person name="Lao N."/>
            <person name="Kavanagh T."/>
            <person name="Hempel S."/>
            <person name="Kotter P."/>
            <person name="Entian K.-D."/>
            <person name="Rieger M."/>
            <person name="Schaefer M."/>
            <person name="Funk B."/>
            <person name="Mueller-Auer S."/>
            <person name="Silvey M."/>
            <person name="James R."/>
            <person name="Monfort A."/>
            <person name="Pons A."/>
            <person name="Puigdomenech P."/>
            <person name="Douka A."/>
            <person name="Voukelatou E."/>
            <person name="Milioni D."/>
            <person name="Hatzopoulos P."/>
            <person name="Piravandi E."/>
            <person name="Obermaier B."/>
            <person name="Hilbert H."/>
            <person name="Duesterhoeft A."/>
            <person name="Moores T."/>
            <person name="Jones J.D.G."/>
            <person name="Eneva T."/>
            <person name="Palme K."/>
            <person name="Benes V."/>
            <person name="Rechmann S."/>
            <person name="Ansorge W."/>
            <person name="Cooke R."/>
            <person name="Berger C."/>
            <person name="Delseny M."/>
            <person name="Voet M."/>
            <person name="Volckaert G."/>
            <person name="Mewes H.-W."/>
            <person name="Klosterman S."/>
            <person name="Schueller C."/>
            <person name="Chalwatzis N."/>
        </authorList>
    </citation>
    <scope>NUCLEOTIDE SEQUENCE [LARGE SCALE GENOMIC DNA]</scope>
    <source>
        <strain>cv. Columbia</strain>
    </source>
</reference>
<reference key="3">
    <citation type="journal article" date="1999" name="Nature">
        <title>Sequence and analysis of chromosome 4 of the plant Arabidopsis thaliana.</title>
        <authorList>
            <person name="Mayer K.F.X."/>
            <person name="Schueller C."/>
            <person name="Wambutt R."/>
            <person name="Murphy G."/>
            <person name="Volckaert G."/>
            <person name="Pohl T."/>
            <person name="Duesterhoeft A."/>
            <person name="Stiekema W."/>
            <person name="Entian K.-D."/>
            <person name="Terryn N."/>
            <person name="Harris B."/>
            <person name="Ansorge W."/>
            <person name="Brandt P."/>
            <person name="Grivell L.A."/>
            <person name="Rieger M."/>
            <person name="Weichselgartner M."/>
            <person name="de Simone V."/>
            <person name="Obermaier B."/>
            <person name="Mache R."/>
            <person name="Mueller M."/>
            <person name="Kreis M."/>
            <person name="Delseny M."/>
            <person name="Puigdomenech P."/>
            <person name="Watson M."/>
            <person name="Schmidtheini T."/>
            <person name="Reichert B."/>
            <person name="Portetelle D."/>
            <person name="Perez-Alonso M."/>
            <person name="Boutry M."/>
            <person name="Bancroft I."/>
            <person name="Vos P."/>
            <person name="Hoheisel J."/>
            <person name="Zimmermann W."/>
            <person name="Wedler H."/>
            <person name="Ridley P."/>
            <person name="Langham S.-A."/>
            <person name="McCullagh B."/>
            <person name="Bilham L."/>
            <person name="Robben J."/>
            <person name="van der Schueren J."/>
            <person name="Grymonprez B."/>
            <person name="Chuang Y.-J."/>
            <person name="Vandenbussche F."/>
            <person name="Braeken M."/>
            <person name="Weltjens I."/>
            <person name="Voet M."/>
            <person name="Bastiaens I."/>
            <person name="Aert R."/>
            <person name="Defoor E."/>
            <person name="Weitzenegger T."/>
            <person name="Bothe G."/>
            <person name="Ramsperger U."/>
            <person name="Hilbert H."/>
            <person name="Braun M."/>
            <person name="Holzer E."/>
            <person name="Brandt A."/>
            <person name="Peters S."/>
            <person name="van Staveren M."/>
            <person name="Dirkse W."/>
            <person name="Mooijman P."/>
            <person name="Klein Lankhorst R."/>
            <person name="Rose M."/>
            <person name="Hauf J."/>
            <person name="Koetter P."/>
            <person name="Berneiser S."/>
            <person name="Hempel S."/>
            <person name="Feldpausch M."/>
            <person name="Lamberth S."/>
            <person name="Van den Daele H."/>
            <person name="De Keyser A."/>
            <person name="Buysshaert C."/>
            <person name="Gielen J."/>
            <person name="Villarroel R."/>
            <person name="De Clercq R."/>
            <person name="van Montagu M."/>
            <person name="Rogers J."/>
            <person name="Cronin A."/>
            <person name="Quail M.A."/>
            <person name="Bray-Allen S."/>
            <person name="Clark L."/>
            <person name="Doggett J."/>
            <person name="Hall S."/>
            <person name="Kay M."/>
            <person name="Lennard N."/>
            <person name="McLay K."/>
            <person name="Mayes R."/>
            <person name="Pettett A."/>
            <person name="Rajandream M.A."/>
            <person name="Lyne M."/>
            <person name="Benes V."/>
            <person name="Rechmann S."/>
            <person name="Borkova D."/>
            <person name="Bloecker H."/>
            <person name="Scharfe M."/>
            <person name="Grimm M."/>
            <person name="Loehnert T.-H."/>
            <person name="Dose S."/>
            <person name="de Haan M."/>
            <person name="Maarse A.C."/>
            <person name="Schaefer M."/>
            <person name="Mueller-Auer S."/>
            <person name="Gabel C."/>
            <person name="Fuchs M."/>
            <person name="Fartmann B."/>
            <person name="Granderath K."/>
            <person name="Dauner D."/>
            <person name="Herzl A."/>
            <person name="Neumann S."/>
            <person name="Argiriou A."/>
            <person name="Vitale D."/>
            <person name="Liguori R."/>
            <person name="Piravandi E."/>
            <person name="Massenet O."/>
            <person name="Quigley F."/>
            <person name="Clabauld G."/>
            <person name="Muendlein A."/>
            <person name="Felber R."/>
            <person name="Schnabl S."/>
            <person name="Hiller R."/>
            <person name="Schmidt W."/>
            <person name="Lecharny A."/>
            <person name="Aubourg S."/>
            <person name="Chefdor F."/>
            <person name="Cooke R."/>
            <person name="Berger C."/>
            <person name="Monfort A."/>
            <person name="Casacuberta E."/>
            <person name="Gibbons T."/>
            <person name="Weber N."/>
            <person name="Vandenbol M."/>
            <person name="Bargues M."/>
            <person name="Terol J."/>
            <person name="Torres A."/>
            <person name="Perez-Perez A."/>
            <person name="Purnelle B."/>
            <person name="Bent E."/>
            <person name="Johnson S."/>
            <person name="Tacon D."/>
            <person name="Jesse T."/>
            <person name="Heijnen L."/>
            <person name="Schwarz S."/>
            <person name="Scholler P."/>
            <person name="Heber S."/>
            <person name="Francs P."/>
            <person name="Bielke C."/>
            <person name="Frishman D."/>
            <person name="Haase D."/>
            <person name="Lemcke K."/>
            <person name="Mewes H.-W."/>
            <person name="Stocker S."/>
            <person name="Zaccaria P."/>
            <person name="Bevan M."/>
            <person name="Wilson R.K."/>
            <person name="de la Bastide M."/>
            <person name="Habermann K."/>
            <person name="Parnell L."/>
            <person name="Dedhia N."/>
            <person name="Gnoj L."/>
            <person name="Schutz K."/>
            <person name="Huang E."/>
            <person name="Spiegel L."/>
            <person name="Sekhon M."/>
            <person name="Murray J."/>
            <person name="Sheet P."/>
            <person name="Cordes M."/>
            <person name="Abu-Threideh J."/>
            <person name="Stoneking T."/>
            <person name="Kalicki J."/>
            <person name="Graves T."/>
            <person name="Harmon G."/>
            <person name="Edwards J."/>
            <person name="Latreille P."/>
            <person name="Courtney L."/>
            <person name="Cloud J."/>
            <person name="Abbott A."/>
            <person name="Scott K."/>
            <person name="Johnson D."/>
            <person name="Minx P."/>
            <person name="Bentley D."/>
            <person name="Fulton B."/>
            <person name="Miller N."/>
            <person name="Greco T."/>
            <person name="Kemp K."/>
            <person name="Kramer J."/>
            <person name="Fulton L."/>
            <person name="Mardis E."/>
            <person name="Dante M."/>
            <person name="Pepin K."/>
            <person name="Hillier L.W."/>
            <person name="Nelson J."/>
            <person name="Spieth J."/>
            <person name="Ryan E."/>
            <person name="Andrews S."/>
            <person name="Geisel C."/>
            <person name="Layman D."/>
            <person name="Du H."/>
            <person name="Ali J."/>
            <person name="Berghoff A."/>
            <person name="Jones K."/>
            <person name="Drone K."/>
            <person name="Cotton M."/>
            <person name="Joshu C."/>
            <person name="Antonoiu B."/>
            <person name="Zidanic M."/>
            <person name="Strong C."/>
            <person name="Sun H."/>
            <person name="Lamar B."/>
            <person name="Yordan C."/>
            <person name="Ma P."/>
            <person name="Zhong J."/>
            <person name="Preston R."/>
            <person name="Vil D."/>
            <person name="Shekher M."/>
            <person name="Matero A."/>
            <person name="Shah R."/>
            <person name="Swaby I.K."/>
            <person name="O'Shaughnessy A."/>
            <person name="Rodriguez M."/>
            <person name="Hoffman J."/>
            <person name="Till S."/>
            <person name="Granat S."/>
            <person name="Shohdy N."/>
            <person name="Hasegawa A."/>
            <person name="Hameed A."/>
            <person name="Lodhi M."/>
            <person name="Johnson A."/>
            <person name="Chen E."/>
            <person name="Marra M.A."/>
            <person name="Martienssen R."/>
            <person name="McCombie W.R."/>
        </authorList>
    </citation>
    <scope>NUCLEOTIDE SEQUENCE [LARGE SCALE GENOMIC DNA]</scope>
    <source>
        <strain>cv. Columbia</strain>
    </source>
</reference>
<reference key="4">
    <citation type="journal article" date="2017" name="Plant J.">
        <title>Araport11: a complete reannotation of the Arabidopsis thaliana reference genome.</title>
        <authorList>
            <person name="Cheng C.Y."/>
            <person name="Krishnakumar V."/>
            <person name="Chan A.P."/>
            <person name="Thibaud-Nissen F."/>
            <person name="Schobel S."/>
            <person name="Town C.D."/>
        </authorList>
    </citation>
    <scope>GENOME REANNOTATION</scope>
    <source>
        <strain>cv. Columbia</strain>
    </source>
</reference>
<reference key="5">
    <citation type="submission" date="2006-07" db="EMBL/GenBank/DDBJ databases">
        <title>Large-scale analysis of RIKEN Arabidopsis full-length (RAFL) cDNAs.</title>
        <authorList>
            <person name="Totoki Y."/>
            <person name="Seki M."/>
            <person name="Ishida J."/>
            <person name="Nakajima M."/>
            <person name="Enju A."/>
            <person name="Kamiya A."/>
            <person name="Narusaka M."/>
            <person name="Shin-i T."/>
            <person name="Nakagawa M."/>
            <person name="Sakamoto N."/>
            <person name="Oishi K."/>
            <person name="Kohara Y."/>
            <person name="Kobayashi M."/>
            <person name="Toyoda A."/>
            <person name="Sakaki Y."/>
            <person name="Sakurai T."/>
            <person name="Iida K."/>
            <person name="Akiyama K."/>
            <person name="Satou M."/>
            <person name="Toyoda T."/>
            <person name="Konagaya A."/>
            <person name="Carninci P."/>
            <person name="Kawai J."/>
            <person name="Hayashizaki Y."/>
            <person name="Shinozaki K."/>
        </authorList>
    </citation>
    <scope>NUCLEOTIDE SEQUENCE [LARGE SCALE MRNA]</scope>
    <source>
        <strain>cv. Columbia</strain>
    </source>
</reference>
<reference key="6">
    <citation type="journal article" date="2004" name="Plant Biotechnol. J.">
        <title>DEAD-box RNA helicases in Arabidopsis thaliana: establishing a link between quantitative expression, gene structure and evolution of a family of genes.</title>
        <authorList>
            <person name="Mingam A."/>
            <person name="Toffano-Nioche C."/>
            <person name="Brunaud V."/>
            <person name="Boudet N."/>
            <person name="Kreis M."/>
            <person name="Lecharny A."/>
        </authorList>
    </citation>
    <scope>GENE FAMILY</scope>
    <scope>NOMENCLATURE</scope>
</reference>
<reference key="7">
    <citation type="journal article" date="2013" name="PLoS ONE">
        <title>Genome-wide comparative in silico analysis of the RNA helicase gene family in Zea mays and Glycine max: a comparison with Arabidopsis and Oryza sativa.</title>
        <authorList>
            <person name="Xu R."/>
            <person name="Zhang S."/>
            <person name="Huang J."/>
            <person name="Zheng C."/>
        </authorList>
    </citation>
    <scope>GENE FAMILY</scope>
</reference>
<keyword id="KW-0067">ATP-binding</keyword>
<keyword id="KW-0175">Coiled coil</keyword>
<keyword id="KW-0347">Helicase</keyword>
<keyword id="KW-0378">Hydrolase</keyword>
<keyword id="KW-0547">Nucleotide-binding</keyword>
<keyword id="KW-1185">Reference proteome</keyword>
<keyword id="KW-0694">RNA-binding</keyword>
<comment type="catalytic activity">
    <reaction>
        <text>ATP + H2O = ADP + phosphate + H(+)</text>
        <dbReference type="Rhea" id="RHEA:13065"/>
        <dbReference type="ChEBI" id="CHEBI:15377"/>
        <dbReference type="ChEBI" id="CHEBI:15378"/>
        <dbReference type="ChEBI" id="CHEBI:30616"/>
        <dbReference type="ChEBI" id="CHEBI:43474"/>
        <dbReference type="ChEBI" id="CHEBI:456216"/>
        <dbReference type="EC" id="3.6.4.13"/>
    </reaction>
</comment>
<comment type="domain">
    <text>The Q motif is unique to and characteristic of the DEAD box family of RNA helicases and controls ATP binding and hydrolysis.</text>
</comment>
<comment type="similarity">
    <text evidence="5">Belongs to the DEAD box helicase family. DDX27/DRS1 subfamily.</text>
</comment>
<comment type="sequence caution" evidence="5">
    <conflict type="erroneous gene model prediction">
        <sequence resource="EMBL-CDS" id="CAB10438"/>
    </conflict>
</comment>
<comment type="sequence caution" evidence="5">
    <conflict type="erroneous gene model prediction">
        <sequence resource="EMBL-CDS" id="CAB78705"/>
    </conflict>
</comment>
<protein>
    <recommendedName>
        <fullName>DEAD-box ATP-dependent RNA helicase 28</fullName>
        <ecNumber>3.6.4.13</ecNumber>
    </recommendedName>
</protein>
<evidence type="ECO:0000255" key="1"/>
<evidence type="ECO:0000255" key="2">
    <source>
        <dbReference type="PROSITE-ProRule" id="PRU00541"/>
    </source>
</evidence>
<evidence type="ECO:0000255" key="3">
    <source>
        <dbReference type="PROSITE-ProRule" id="PRU00542"/>
    </source>
</evidence>
<evidence type="ECO:0000256" key="4">
    <source>
        <dbReference type="SAM" id="MobiDB-lite"/>
    </source>
</evidence>
<evidence type="ECO:0000305" key="5"/>
<proteinExistence type="evidence at transcript level"/>
<dbReference type="EC" id="3.6.4.13"/>
<dbReference type="EMBL" id="AJ010475">
    <property type="protein sequence ID" value="CAA09214.1"/>
    <property type="molecule type" value="mRNA"/>
</dbReference>
<dbReference type="EMBL" id="Z97341">
    <property type="protein sequence ID" value="CAB10438.1"/>
    <property type="status" value="ALT_SEQ"/>
    <property type="molecule type" value="Genomic_DNA"/>
</dbReference>
<dbReference type="EMBL" id="AL161544">
    <property type="protein sequence ID" value="CAB78705.1"/>
    <property type="status" value="ALT_SEQ"/>
    <property type="molecule type" value="Genomic_DNA"/>
</dbReference>
<dbReference type="EMBL" id="CP002687">
    <property type="protein sequence ID" value="AEE83778.1"/>
    <property type="molecule type" value="Genomic_DNA"/>
</dbReference>
<dbReference type="EMBL" id="AK228353">
    <property type="protein sequence ID" value="BAF00292.1"/>
    <property type="molecule type" value="mRNA"/>
</dbReference>
<dbReference type="PIR" id="D71433">
    <property type="entry name" value="D71433"/>
</dbReference>
<dbReference type="PIR" id="T51310">
    <property type="entry name" value="T51310"/>
</dbReference>
<dbReference type="RefSeq" id="NP_193396.3">
    <property type="nucleotide sequence ID" value="NM_117764.5"/>
</dbReference>
<dbReference type="SMR" id="Q9ZRZ8"/>
<dbReference type="BioGRID" id="12657">
    <property type="interactions" value="4"/>
</dbReference>
<dbReference type="FunCoup" id="Q9ZRZ8">
    <property type="interactions" value="3672"/>
</dbReference>
<dbReference type="IntAct" id="Q9ZRZ8">
    <property type="interactions" value="4"/>
</dbReference>
<dbReference type="STRING" id="3702.Q9ZRZ8"/>
<dbReference type="iPTMnet" id="Q9ZRZ8"/>
<dbReference type="PaxDb" id="3702-AT4G16630.1"/>
<dbReference type="ProteomicsDB" id="236928"/>
<dbReference type="EnsemblPlants" id="AT4G16630.1">
    <property type="protein sequence ID" value="AT4G16630.1"/>
    <property type="gene ID" value="AT4G16630"/>
</dbReference>
<dbReference type="GeneID" id="827364"/>
<dbReference type="Gramene" id="AT4G16630.1">
    <property type="protein sequence ID" value="AT4G16630.1"/>
    <property type="gene ID" value="AT4G16630"/>
</dbReference>
<dbReference type="KEGG" id="ath:AT4G16630"/>
<dbReference type="Araport" id="AT4G16630"/>
<dbReference type="TAIR" id="AT4G16630"/>
<dbReference type="eggNOG" id="KOG0338">
    <property type="taxonomic scope" value="Eukaryota"/>
</dbReference>
<dbReference type="HOGENOM" id="CLU_003041_3_3_1"/>
<dbReference type="InParanoid" id="Q9ZRZ8"/>
<dbReference type="OMA" id="ERRTWFQ"/>
<dbReference type="PhylomeDB" id="Q9ZRZ8"/>
<dbReference type="CD-CODE" id="4299E36E">
    <property type="entry name" value="Nucleolus"/>
</dbReference>
<dbReference type="PRO" id="PR:Q9ZRZ8"/>
<dbReference type="Proteomes" id="UP000006548">
    <property type="component" value="Chromosome 4"/>
</dbReference>
<dbReference type="ExpressionAtlas" id="Q9ZRZ8">
    <property type="expression patterns" value="baseline and differential"/>
</dbReference>
<dbReference type="GO" id="GO:0005524">
    <property type="term" value="F:ATP binding"/>
    <property type="evidence" value="ECO:0007669"/>
    <property type="project" value="UniProtKB-KW"/>
</dbReference>
<dbReference type="GO" id="GO:0016887">
    <property type="term" value="F:ATP hydrolysis activity"/>
    <property type="evidence" value="ECO:0007669"/>
    <property type="project" value="RHEA"/>
</dbReference>
<dbReference type="GO" id="GO:0003723">
    <property type="term" value="F:RNA binding"/>
    <property type="evidence" value="ECO:0007669"/>
    <property type="project" value="UniProtKB-KW"/>
</dbReference>
<dbReference type="GO" id="GO:0003724">
    <property type="term" value="F:RNA helicase activity"/>
    <property type="evidence" value="ECO:0007669"/>
    <property type="project" value="UniProtKB-EC"/>
</dbReference>
<dbReference type="CDD" id="cd17947">
    <property type="entry name" value="DEADc_DDX27"/>
    <property type="match status" value="1"/>
</dbReference>
<dbReference type="CDD" id="cd18787">
    <property type="entry name" value="SF2_C_DEAD"/>
    <property type="match status" value="1"/>
</dbReference>
<dbReference type="Gene3D" id="3.40.50.300">
    <property type="entry name" value="P-loop containing nucleotide triphosphate hydrolases"/>
    <property type="match status" value="2"/>
</dbReference>
<dbReference type="InterPro" id="IPR011545">
    <property type="entry name" value="DEAD/DEAH_box_helicase_dom"/>
</dbReference>
<dbReference type="InterPro" id="IPR050079">
    <property type="entry name" value="DEAD_box_RNA_helicase"/>
</dbReference>
<dbReference type="InterPro" id="IPR014001">
    <property type="entry name" value="Helicase_ATP-bd"/>
</dbReference>
<dbReference type="InterPro" id="IPR001650">
    <property type="entry name" value="Helicase_C-like"/>
</dbReference>
<dbReference type="InterPro" id="IPR027417">
    <property type="entry name" value="P-loop_NTPase"/>
</dbReference>
<dbReference type="InterPro" id="IPR000629">
    <property type="entry name" value="RNA-helicase_DEAD-box_CS"/>
</dbReference>
<dbReference type="InterPro" id="IPR014014">
    <property type="entry name" value="RNA_helicase_DEAD_Q_motif"/>
</dbReference>
<dbReference type="PANTHER" id="PTHR47959">
    <property type="entry name" value="ATP-DEPENDENT RNA HELICASE RHLE-RELATED"/>
    <property type="match status" value="1"/>
</dbReference>
<dbReference type="PANTHER" id="PTHR47959:SF14">
    <property type="entry name" value="DEAD-BOX ATP-DEPENDENT RNA HELICASE 28"/>
    <property type="match status" value="1"/>
</dbReference>
<dbReference type="Pfam" id="PF00270">
    <property type="entry name" value="DEAD"/>
    <property type="match status" value="1"/>
</dbReference>
<dbReference type="Pfam" id="PF00271">
    <property type="entry name" value="Helicase_C"/>
    <property type="match status" value="1"/>
</dbReference>
<dbReference type="SMART" id="SM00487">
    <property type="entry name" value="DEXDc"/>
    <property type="match status" value="1"/>
</dbReference>
<dbReference type="SMART" id="SM00490">
    <property type="entry name" value="HELICc"/>
    <property type="match status" value="1"/>
</dbReference>
<dbReference type="SUPFAM" id="SSF52540">
    <property type="entry name" value="P-loop containing nucleoside triphosphate hydrolases"/>
    <property type="match status" value="2"/>
</dbReference>
<dbReference type="PROSITE" id="PS00039">
    <property type="entry name" value="DEAD_ATP_HELICASE"/>
    <property type="match status" value="1"/>
</dbReference>
<dbReference type="PROSITE" id="PS51192">
    <property type="entry name" value="HELICASE_ATP_BIND_1"/>
    <property type="match status" value="1"/>
</dbReference>
<dbReference type="PROSITE" id="PS51194">
    <property type="entry name" value="HELICASE_CTER"/>
    <property type="match status" value="1"/>
</dbReference>
<dbReference type="PROSITE" id="PS51195">
    <property type="entry name" value="Q_MOTIF"/>
    <property type="match status" value="1"/>
</dbReference>